<sequence length="355" mass="39960">MVRNEKKCIGIIFGGTSNEHYVSISSAKTVFKALISRTNKELFRIKAFYINKHGVWIDSDLSLEILRENSGNNIFEKYQELPNRKINFLNNLEFQNIDIWFPLLHGCNGEDGAIHGLLKFTQKPLIGCGISGSAIGMDKILMKQIFSNLSIPQVNFLAIQNYDLSDDNVKDNLSVEIIEKLNLPVFVKPANSGSSLGISKAKNKSEIIKALQKAWEIDSRIVIEEGLNVRELECGIIGNLKLSTSKIGEVSYSSDWYDYDSKYSTDNKIIIPADIDSQISEQIKDLAIRSCRALNIYGFARVDFFLEKISRKIFLNEINTIPGFTSKSMFPMLWKASGLNIDQLVAKLIDISLDS</sequence>
<accession>A2BY13</accession>
<keyword id="KW-0067">ATP-binding</keyword>
<keyword id="KW-0133">Cell shape</keyword>
<keyword id="KW-0961">Cell wall biogenesis/degradation</keyword>
<keyword id="KW-0963">Cytoplasm</keyword>
<keyword id="KW-0436">Ligase</keyword>
<keyword id="KW-0460">Magnesium</keyword>
<keyword id="KW-0464">Manganese</keyword>
<keyword id="KW-0479">Metal-binding</keyword>
<keyword id="KW-0547">Nucleotide-binding</keyword>
<keyword id="KW-0573">Peptidoglycan synthesis</keyword>
<organism>
    <name type="scientific">Prochlorococcus marinus (strain MIT 9515)</name>
    <dbReference type="NCBI Taxonomy" id="167542"/>
    <lineage>
        <taxon>Bacteria</taxon>
        <taxon>Bacillati</taxon>
        <taxon>Cyanobacteriota</taxon>
        <taxon>Cyanophyceae</taxon>
        <taxon>Synechococcales</taxon>
        <taxon>Prochlorococcaceae</taxon>
        <taxon>Prochlorococcus</taxon>
    </lineage>
</organism>
<feature type="chain" id="PRO_1000030481" description="D-alanine--D-alanine ligase">
    <location>
        <begin position="1"/>
        <end position="355"/>
    </location>
</feature>
<feature type="domain" description="ATP-grasp" evidence="2">
    <location>
        <begin position="143"/>
        <end position="350"/>
    </location>
</feature>
<feature type="binding site" evidence="2">
    <location>
        <begin position="178"/>
        <end position="233"/>
    </location>
    <ligand>
        <name>ATP</name>
        <dbReference type="ChEBI" id="CHEBI:30616"/>
    </ligand>
</feature>
<feature type="binding site" evidence="2">
    <location>
        <position position="303"/>
    </location>
    <ligand>
        <name>Mg(2+)</name>
        <dbReference type="ChEBI" id="CHEBI:18420"/>
        <label>1</label>
    </ligand>
</feature>
<feature type="binding site" evidence="2">
    <location>
        <position position="317"/>
    </location>
    <ligand>
        <name>Mg(2+)</name>
        <dbReference type="ChEBI" id="CHEBI:18420"/>
        <label>1</label>
    </ligand>
</feature>
<feature type="binding site" evidence="2">
    <location>
        <position position="317"/>
    </location>
    <ligand>
        <name>Mg(2+)</name>
        <dbReference type="ChEBI" id="CHEBI:18420"/>
        <label>2</label>
    </ligand>
</feature>
<feature type="binding site" evidence="2">
    <location>
        <position position="319"/>
    </location>
    <ligand>
        <name>Mg(2+)</name>
        <dbReference type="ChEBI" id="CHEBI:18420"/>
        <label>2</label>
    </ligand>
</feature>
<protein>
    <recommendedName>
        <fullName evidence="2">D-alanine--D-alanine ligase</fullName>
        <ecNumber evidence="2">6.3.2.4</ecNumber>
    </recommendedName>
    <alternativeName>
        <fullName evidence="2">D-Ala-D-Ala ligase</fullName>
    </alternativeName>
    <alternativeName>
        <fullName evidence="2">D-alanylalanine synthetase</fullName>
    </alternativeName>
</protein>
<evidence type="ECO:0000250" key="1"/>
<evidence type="ECO:0000255" key="2">
    <source>
        <dbReference type="HAMAP-Rule" id="MF_00047"/>
    </source>
</evidence>
<comment type="function">
    <text evidence="2">Cell wall formation.</text>
</comment>
<comment type="catalytic activity">
    <reaction evidence="2">
        <text>2 D-alanine + ATP = D-alanyl-D-alanine + ADP + phosphate + H(+)</text>
        <dbReference type="Rhea" id="RHEA:11224"/>
        <dbReference type="ChEBI" id="CHEBI:15378"/>
        <dbReference type="ChEBI" id="CHEBI:30616"/>
        <dbReference type="ChEBI" id="CHEBI:43474"/>
        <dbReference type="ChEBI" id="CHEBI:57416"/>
        <dbReference type="ChEBI" id="CHEBI:57822"/>
        <dbReference type="ChEBI" id="CHEBI:456216"/>
        <dbReference type="EC" id="6.3.2.4"/>
    </reaction>
</comment>
<comment type="cofactor">
    <cofactor evidence="1">
        <name>Mg(2+)</name>
        <dbReference type="ChEBI" id="CHEBI:18420"/>
    </cofactor>
    <cofactor evidence="1">
        <name>Mn(2+)</name>
        <dbReference type="ChEBI" id="CHEBI:29035"/>
    </cofactor>
    <text evidence="1">Binds 2 magnesium or manganese ions per subunit.</text>
</comment>
<comment type="pathway">
    <text evidence="2">Cell wall biogenesis; peptidoglycan biosynthesis.</text>
</comment>
<comment type="subcellular location">
    <subcellularLocation>
        <location evidence="2">Cytoplasm</location>
    </subcellularLocation>
</comment>
<comment type="similarity">
    <text evidence="2">Belongs to the D-alanine--D-alanine ligase family.</text>
</comment>
<proteinExistence type="inferred from homology"/>
<reference key="1">
    <citation type="journal article" date="2007" name="PLoS Genet.">
        <title>Patterns and implications of gene gain and loss in the evolution of Prochlorococcus.</title>
        <authorList>
            <person name="Kettler G.C."/>
            <person name="Martiny A.C."/>
            <person name="Huang K."/>
            <person name="Zucker J."/>
            <person name="Coleman M.L."/>
            <person name="Rodrigue S."/>
            <person name="Chen F."/>
            <person name="Lapidus A."/>
            <person name="Ferriera S."/>
            <person name="Johnson J."/>
            <person name="Steglich C."/>
            <person name="Church G.M."/>
            <person name="Richardson P."/>
            <person name="Chisholm S.W."/>
        </authorList>
    </citation>
    <scope>NUCLEOTIDE SEQUENCE [LARGE SCALE GENOMIC DNA]</scope>
    <source>
        <strain>MIT 9515</strain>
    </source>
</reference>
<name>DDL_PROM5</name>
<gene>
    <name evidence="2" type="primary">ddl</name>
    <name type="ordered locus">P9515_14671</name>
</gene>
<dbReference type="EC" id="6.3.2.4" evidence="2"/>
<dbReference type="EMBL" id="CP000552">
    <property type="protein sequence ID" value="ABM72674.1"/>
    <property type="molecule type" value="Genomic_DNA"/>
</dbReference>
<dbReference type="RefSeq" id="WP_011820771.1">
    <property type="nucleotide sequence ID" value="NC_008817.1"/>
</dbReference>
<dbReference type="SMR" id="A2BY13"/>
<dbReference type="STRING" id="167542.P9515_14671"/>
<dbReference type="GeneID" id="60201195"/>
<dbReference type="KEGG" id="pmc:P9515_14671"/>
<dbReference type="eggNOG" id="COG1181">
    <property type="taxonomic scope" value="Bacteria"/>
</dbReference>
<dbReference type="HOGENOM" id="CLU_039268_0_0_3"/>
<dbReference type="OrthoDB" id="9813261at2"/>
<dbReference type="UniPathway" id="UPA00219"/>
<dbReference type="Proteomes" id="UP000001589">
    <property type="component" value="Chromosome"/>
</dbReference>
<dbReference type="GO" id="GO:0005829">
    <property type="term" value="C:cytosol"/>
    <property type="evidence" value="ECO:0007669"/>
    <property type="project" value="TreeGrafter"/>
</dbReference>
<dbReference type="GO" id="GO:0005524">
    <property type="term" value="F:ATP binding"/>
    <property type="evidence" value="ECO:0007669"/>
    <property type="project" value="UniProtKB-KW"/>
</dbReference>
<dbReference type="GO" id="GO:0008716">
    <property type="term" value="F:D-alanine-D-alanine ligase activity"/>
    <property type="evidence" value="ECO:0007669"/>
    <property type="project" value="UniProtKB-UniRule"/>
</dbReference>
<dbReference type="GO" id="GO:0046872">
    <property type="term" value="F:metal ion binding"/>
    <property type="evidence" value="ECO:0007669"/>
    <property type="project" value="UniProtKB-KW"/>
</dbReference>
<dbReference type="GO" id="GO:0071555">
    <property type="term" value="P:cell wall organization"/>
    <property type="evidence" value="ECO:0007669"/>
    <property type="project" value="UniProtKB-KW"/>
</dbReference>
<dbReference type="GO" id="GO:0009252">
    <property type="term" value="P:peptidoglycan biosynthetic process"/>
    <property type="evidence" value="ECO:0007669"/>
    <property type="project" value="UniProtKB-UniRule"/>
</dbReference>
<dbReference type="GO" id="GO:0008360">
    <property type="term" value="P:regulation of cell shape"/>
    <property type="evidence" value="ECO:0007669"/>
    <property type="project" value="UniProtKB-KW"/>
</dbReference>
<dbReference type="Gene3D" id="3.40.50.20">
    <property type="match status" value="1"/>
</dbReference>
<dbReference type="Gene3D" id="3.30.1490.20">
    <property type="entry name" value="ATP-grasp fold, A domain"/>
    <property type="match status" value="1"/>
</dbReference>
<dbReference type="Gene3D" id="3.30.470.20">
    <property type="entry name" value="ATP-grasp fold, B domain"/>
    <property type="match status" value="1"/>
</dbReference>
<dbReference type="HAMAP" id="MF_00047">
    <property type="entry name" value="Dala_Dala_lig"/>
    <property type="match status" value="1"/>
</dbReference>
<dbReference type="InterPro" id="IPR011761">
    <property type="entry name" value="ATP-grasp"/>
</dbReference>
<dbReference type="InterPro" id="IPR013815">
    <property type="entry name" value="ATP_grasp_subdomain_1"/>
</dbReference>
<dbReference type="InterPro" id="IPR000291">
    <property type="entry name" value="D-Ala_lig_Van_CS"/>
</dbReference>
<dbReference type="InterPro" id="IPR005905">
    <property type="entry name" value="D_ala_D_ala"/>
</dbReference>
<dbReference type="InterPro" id="IPR011095">
    <property type="entry name" value="Dala_Dala_lig_C"/>
</dbReference>
<dbReference type="InterPro" id="IPR011127">
    <property type="entry name" value="Dala_Dala_lig_N"/>
</dbReference>
<dbReference type="InterPro" id="IPR016185">
    <property type="entry name" value="PreATP-grasp_dom_sf"/>
</dbReference>
<dbReference type="NCBIfam" id="TIGR01205">
    <property type="entry name" value="D_ala_D_alaTIGR"/>
    <property type="match status" value="1"/>
</dbReference>
<dbReference type="NCBIfam" id="NF002528">
    <property type="entry name" value="PRK01966.1-4"/>
    <property type="match status" value="1"/>
</dbReference>
<dbReference type="PANTHER" id="PTHR23132">
    <property type="entry name" value="D-ALANINE--D-ALANINE LIGASE"/>
    <property type="match status" value="1"/>
</dbReference>
<dbReference type="PANTHER" id="PTHR23132:SF25">
    <property type="entry name" value="D-ALANINE--D-ALANINE LIGASE A"/>
    <property type="match status" value="1"/>
</dbReference>
<dbReference type="Pfam" id="PF07478">
    <property type="entry name" value="Dala_Dala_lig_C"/>
    <property type="match status" value="1"/>
</dbReference>
<dbReference type="Pfam" id="PF01820">
    <property type="entry name" value="Dala_Dala_lig_N"/>
    <property type="match status" value="1"/>
</dbReference>
<dbReference type="PIRSF" id="PIRSF039102">
    <property type="entry name" value="Ddl/VanB"/>
    <property type="match status" value="1"/>
</dbReference>
<dbReference type="SUPFAM" id="SSF56059">
    <property type="entry name" value="Glutathione synthetase ATP-binding domain-like"/>
    <property type="match status" value="1"/>
</dbReference>
<dbReference type="SUPFAM" id="SSF52440">
    <property type="entry name" value="PreATP-grasp domain"/>
    <property type="match status" value="1"/>
</dbReference>
<dbReference type="PROSITE" id="PS50975">
    <property type="entry name" value="ATP_GRASP"/>
    <property type="match status" value="1"/>
</dbReference>
<dbReference type="PROSITE" id="PS00843">
    <property type="entry name" value="DALA_DALA_LIGASE_1"/>
    <property type="match status" value="1"/>
</dbReference>
<dbReference type="PROSITE" id="PS00844">
    <property type="entry name" value="DALA_DALA_LIGASE_2"/>
    <property type="match status" value="1"/>
</dbReference>